<proteinExistence type="evidence at protein level"/>
<organism>
    <name type="scientific">Schizosaccharomyces pombe (strain 972 / ATCC 24843)</name>
    <name type="common">Fission yeast</name>
    <dbReference type="NCBI Taxonomy" id="284812"/>
    <lineage>
        <taxon>Eukaryota</taxon>
        <taxon>Fungi</taxon>
        <taxon>Dikarya</taxon>
        <taxon>Ascomycota</taxon>
        <taxon>Taphrinomycotina</taxon>
        <taxon>Schizosaccharomycetes</taxon>
        <taxon>Schizosaccharomycetales</taxon>
        <taxon>Schizosaccharomycetaceae</taxon>
        <taxon>Schizosaccharomyces</taxon>
    </lineage>
</organism>
<protein>
    <recommendedName>
        <fullName>mRNA decapping complex subunit 2</fullName>
        <ecNumber>3.-.-.-</ecNumber>
    </recommendedName>
</protein>
<dbReference type="EC" id="3.-.-.-"/>
<dbReference type="EMBL" id="CU329670">
    <property type="protein sequence ID" value="CAB11648.1"/>
    <property type="molecule type" value="Genomic_DNA"/>
</dbReference>
<dbReference type="PIR" id="T37949">
    <property type="entry name" value="T37949"/>
</dbReference>
<dbReference type="RefSeq" id="NP_593780.1">
    <property type="nucleotide sequence ID" value="NM_001019209.2"/>
</dbReference>
<dbReference type="PDB" id="2A6T">
    <property type="method" value="X-ray"/>
    <property type="resolution" value="2.50 A"/>
    <property type="chains" value="A/B=1-266"/>
</dbReference>
<dbReference type="PDB" id="2QKL">
    <property type="method" value="X-ray"/>
    <property type="resolution" value="2.33 A"/>
    <property type="chains" value="B=1-95"/>
</dbReference>
<dbReference type="PDB" id="2QKM">
    <property type="method" value="X-ray"/>
    <property type="resolution" value="2.80 A"/>
    <property type="chains" value="B/D/F/H=1-266"/>
</dbReference>
<dbReference type="PDB" id="4A54">
    <property type="method" value="NMR"/>
    <property type="chains" value="B=242-291"/>
</dbReference>
<dbReference type="PDB" id="5J3T">
    <property type="method" value="X-ray"/>
    <property type="resolution" value="1.60 A"/>
    <property type="chains" value="B=1-242"/>
</dbReference>
<dbReference type="PDB" id="5J3Y">
    <property type="method" value="X-ray"/>
    <property type="resolution" value="3.29 A"/>
    <property type="chains" value="B/D=1-242"/>
</dbReference>
<dbReference type="PDB" id="5KQ1">
    <property type="method" value="X-ray"/>
    <property type="resolution" value="3.00 A"/>
    <property type="chains" value="B/E=1-244"/>
</dbReference>
<dbReference type="PDB" id="5KQ4">
    <property type="method" value="X-ray"/>
    <property type="resolution" value="2.56 A"/>
    <property type="chains" value="B/E=1-244"/>
</dbReference>
<dbReference type="PDB" id="5N2V">
    <property type="method" value="X-ray"/>
    <property type="resolution" value="3.10 A"/>
    <property type="chains" value="B/E=1-243"/>
</dbReference>
<dbReference type="PDBsum" id="2A6T"/>
<dbReference type="PDBsum" id="2QKL"/>
<dbReference type="PDBsum" id="2QKM"/>
<dbReference type="PDBsum" id="4A54"/>
<dbReference type="PDBsum" id="5J3T"/>
<dbReference type="PDBsum" id="5J3Y"/>
<dbReference type="PDBsum" id="5KQ1"/>
<dbReference type="PDBsum" id="5KQ4"/>
<dbReference type="PDBsum" id="5N2V"/>
<dbReference type="BMRB" id="O13828"/>
<dbReference type="SMR" id="O13828"/>
<dbReference type="BioGRID" id="278961">
    <property type="interactions" value="18"/>
</dbReference>
<dbReference type="DIP" id="DIP-29009N"/>
<dbReference type="FunCoup" id="O13828">
    <property type="interactions" value="84"/>
</dbReference>
<dbReference type="IntAct" id="O13828">
    <property type="interactions" value="4"/>
</dbReference>
<dbReference type="MINT" id="O13828"/>
<dbReference type="STRING" id="284812.O13828"/>
<dbReference type="iPTMnet" id="O13828"/>
<dbReference type="PaxDb" id="4896-SPAC19A8.12.1"/>
<dbReference type="EnsemblFungi" id="SPAC19A8.12.1">
    <property type="protein sequence ID" value="SPAC19A8.12.1:pep"/>
    <property type="gene ID" value="SPAC19A8.12"/>
</dbReference>
<dbReference type="GeneID" id="2542503"/>
<dbReference type="KEGG" id="spo:2542503"/>
<dbReference type="PomBase" id="SPAC19A8.12">
    <property type="gene designation" value="dcp2"/>
</dbReference>
<dbReference type="VEuPathDB" id="FungiDB:SPAC19A8.12"/>
<dbReference type="eggNOG" id="KOG2937">
    <property type="taxonomic scope" value="Eukaryota"/>
</dbReference>
<dbReference type="HOGENOM" id="CLU_384097_0_0_1"/>
<dbReference type="InParanoid" id="O13828"/>
<dbReference type="BRENDA" id="3.6.1.62">
    <property type="organism ID" value="5613"/>
</dbReference>
<dbReference type="CD-CODE" id="0808F6DD">
    <property type="entry name" value="P-body"/>
</dbReference>
<dbReference type="CD-CODE" id="5113914A">
    <property type="entry name" value="Synthetic Condensate 000100"/>
</dbReference>
<dbReference type="CD-CODE" id="BADB2D85">
    <property type="entry name" value="Synthetic Condensate 000094"/>
</dbReference>
<dbReference type="EvolutionaryTrace" id="O13828"/>
<dbReference type="PRO" id="PR:O13828"/>
<dbReference type="Proteomes" id="UP000002485">
    <property type="component" value="Chromosome I"/>
</dbReference>
<dbReference type="GO" id="GO:0005737">
    <property type="term" value="C:cytoplasm"/>
    <property type="evidence" value="ECO:0000314"/>
    <property type="project" value="PomBase"/>
</dbReference>
<dbReference type="GO" id="GO:0010494">
    <property type="term" value="C:cytoplasmic stress granule"/>
    <property type="evidence" value="ECO:0000314"/>
    <property type="project" value="PomBase"/>
</dbReference>
<dbReference type="GO" id="GO:0005829">
    <property type="term" value="C:cytosol"/>
    <property type="evidence" value="ECO:0007005"/>
    <property type="project" value="PomBase"/>
</dbReference>
<dbReference type="GO" id="GO:0005634">
    <property type="term" value="C:nucleus"/>
    <property type="evidence" value="ECO:0007005"/>
    <property type="project" value="PomBase"/>
</dbReference>
<dbReference type="GO" id="GO:0000932">
    <property type="term" value="C:P-body"/>
    <property type="evidence" value="ECO:0000314"/>
    <property type="project" value="PomBase"/>
</dbReference>
<dbReference type="GO" id="GO:0098745">
    <property type="term" value="C:RNA decapping complex"/>
    <property type="evidence" value="ECO:0000314"/>
    <property type="project" value="PomBase"/>
</dbReference>
<dbReference type="GO" id="GO:0140932">
    <property type="term" value="F:5'-(N(7)-methyl 5'-triphosphoguanosine)-[mRNA] diphosphatase activity"/>
    <property type="evidence" value="ECO:0000314"/>
    <property type="project" value="PomBase"/>
</dbReference>
<dbReference type="GO" id="GO:0140933">
    <property type="term" value="F:5'-(N(7)-methylguanosine 5'-triphospho)-[mRNA] hydrolase activity"/>
    <property type="evidence" value="ECO:0007669"/>
    <property type="project" value="InterPro"/>
</dbReference>
<dbReference type="GO" id="GO:0005524">
    <property type="term" value="F:ATP binding"/>
    <property type="evidence" value="ECO:0000314"/>
    <property type="project" value="PomBase"/>
</dbReference>
<dbReference type="GO" id="GO:0000287">
    <property type="term" value="F:magnesium ion binding"/>
    <property type="evidence" value="ECO:0000304"/>
    <property type="project" value="PomBase"/>
</dbReference>
<dbReference type="GO" id="GO:0030145">
    <property type="term" value="F:manganese ion binding"/>
    <property type="evidence" value="ECO:0007669"/>
    <property type="project" value="InterPro"/>
</dbReference>
<dbReference type="GO" id="GO:0098808">
    <property type="term" value="F:mRNA cap binding"/>
    <property type="evidence" value="ECO:0000269"/>
    <property type="project" value="PomBase"/>
</dbReference>
<dbReference type="GO" id="GO:0003727">
    <property type="term" value="F:single-stranded RNA binding"/>
    <property type="evidence" value="ECO:0000314"/>
    <property type="project" value="PomBase"/>
</dbReference>
<dbReference type="GO" id="GO:0000290">
    <property type="term" value="P:deadenylation-dependent decapping of nuclear-transcribed mRNA"/>
    <property type="evidence" value="ECO:0000318"/>
    <property type="project" value="GO_Central"/>
</dbReference>
<dbReference type="GO" id="GO:0110156">
    <property type="term" value="P:mRNA methylguanosine-cap decapping"/>
    <property type="evidence" value="ECO:0000314"/>
    <property type="project" value="PomBase"/>
</dbReference>
<dbReference type="GO" id="GO:0006397">
    <property type="term" value="P:mRNA processing"/>
    <property type="evidence" value="ECO:0007669"/>
    <property type="project" value="UniProtKB-KW"/>
</dbReference>
<dbReference type="GO" id="GO:0000184">
    <property type="term" value="P:nuclear-transcribed mRNA catabolic process, nonsense-mediated decay"/>
    <property type="evidence" value="ECO:0007669"/>
    <property type="project" value="InterPro"/>
</dbReference>
<dbReference type="CDD" id="cd03672">
    <property type="entry name" value="NUDIX_Dcp2p_Nudt20"/>
    <property type="match status" value="1"/>
</dbReference>
<dbReference type="DisProt" id="DP01482"/>
<dbReference type="FunFam" id="1.10.10.1050:FF:000003">
    <property type="entry name" value="Decapping enzyme Dcp2, putative"/>
    <property type="match status" value="1"/>
</dbReference>
<dbReference type="FunFam" id="3.90.79.10:FF:000003">
    <property type="entry name" value="M7GpppN-mRNA hydrolase isoform 2"/>
    <property type="match status" value="1"/>
</dbReference>
<dbReference type="Gene3D" id="1.10.10.1050">
    <property type="entry name" value="Dcp2, box A domain"/>
    <property type="match status" value="1"/>
</dbReference>
<dbReference type="Gene3D" id="3.90.79.10">
    <property type="entry name" value="Nucleoside Triphosphate Pyrophosphohydrolase"/>
    <property type="match status" value="1"/>
</dbReference>
<dbReference type="InterPro" id="IPR007722">
    <property type="entry name" value="DCP2_BoxA"/>
</dbReference>
<dbReference type="InterPro" id="IPR036189">
    <property type="entry name" value="DCP2_BoxA_sf"/>
</dbReference>
<dbReference type="InterPro" id="IPR044099">
    <property type="entry name" value="Dcp2_NUDIX"/>
</dbReference>
<dbReference type="InterPro" id="IPR015797">
    <property type="entry name" value="NUDIX_hydrolase-like_dom_sf"/>
</dbReference>
<dbReference type="InterPro" id="IPR020084">
    <property type="entry name" value="NUDIX_hydrolase_CS"/>
</dbReference>
<dbReference type="InterPro" id="IPR000086">
    <property type="entry name" value="NUDIX_hydrolase_dom"/>
</dbReference>
<dbReference type="PANTHER" id="PTHR23114">
    <property type="entry name" value="M7GPPPN-MRNA HYDROLASE"/>
    <property type="match status" value="1"/>
</dbReference>
<dbReference type="PANTHER" id="PTHR23114:SF17">
    <property type="entry name" value="M7GPPPN-MRNA HYDROLASE"/>
    <property type="match status" value="1"/>
</dbReference>
<dbReference type="Pfam" id="PF05026">
    <property type="entry name" value="DCP2"/>
    <property type="match status" value="1"/>
</dbReference>
<dbReference type="Pfam" id="PF00293">
    <property type="entry name" value="NUDIX"/>
    <property type="match status" value="1"/>
</dbReference>
<dbReference type="SMART" id="SM01125">
    <property type="entry name" value="DCP2"/>
    <property type="match status" value="1"/>
</dbReference>
<dbReference type="SUPFAM" id="SSF140586">
    <property type="entry name" value="Dcp2 domain-like"/>
    <property type="match status" value="1"/>
</dbReference>
<dbReference type="SUPFAM" id="SSF55811">
    <property type="entry name" value="Nudix"/>
    <property type="match status" value="1"/>
</dbReference>
<dbReference type="PROSITE" id="PS51462">
    <property type="entry name" value="NUDIX"/>
    <property type="match status" value="1"/>
</dbReference>
<dbReference type="PROSITE" id="PS00893">
    <property type="entry name" value="NUDIX_BOX"/>
    <property type="match status" value="1"/>
</dbReference>
<evidence type="ECO:0000250" key="1"/>
<evidence type="ECO:0000255" key="2">
    <source>
        <dbReference type="PROSITE-ProRule" id="PRU00794"/>
    </source>
</evidence>
<evidence type="ECO:0000256" key="3">
    <source>
        <dbReference type="SAM" id="MobiDB-lite"/>
    </source>
</evidence>
<evidence type="ECO:0000269" key="4">
    <source>
    </source>
</evidence>
<evidence type="ECO:0000269" key="5">
    <source>
    </source>
</evidence>
<evidence type="ECO:0000269" key="6">
    <source>
    </source>
</evidence>
<evidence type="ECO:0000269" key="7">
    <source>
    </source>
</evidence>
<evidence type="ECO:0000269" key="8">
    <source>
    </source>
</evidence>
<evidence type="ECO:0000269" key="9">
    <source>
    </source>
</evidence>
<evidence type="ECO:0000269" key="10">
    <source>
    </source>
</evidence>
<evidence type="ECO:0000305" key="11"/>
<evidence type="ECO:0007829" key="12">
    <source>
        <dbReference type="PDB" id="2A6T"/>
    </source>
</evidence>
<evidence type="ECO:0007829" key="13">
    <source>
        <dbReference type="PDB" id="2QKM"/>
    </source>
</evidence>
<evidence type="ECO:0007829" key="14">
    <source>
        <dbReference type="PDB" id="4A54"/>
    </source>
</evidence>
<evidence type="ECO:0007829" key="15">
    <source>
        <dbReference type="PDB" id="5J3T"/>
    </source>
</evidence>
<evidence type="ECO:0007829" key="16">
    <source>
        <dbReference type="PDB" id="5KQ1"/>
    </source>
</evidence>
<evidence type="ECO:0007829" key="17">
    <source>
        <dbReference type="PDB" id="5KQ4"/>
    </source>
</evidence>
<evidence type="ECO:0007829" key="18">
    <source>
        <dbReference type="PDB" id="5N2V"/>
    </source>
</evidence>
<name>DCP2_SCHPO</name>
<accession>O13828</accession>
<keyword id="KW-0002">3D-structure</keyword>
<keyword id="KW-0067">ATP-binding</keyword>
<keyword id="KW-0963">Cytoplasm</keyword>
<keyword id="KW-0378">Hydrolase</keyword>
<keyword id="KW-0464">Manganese</keyword>
<keyword id="KW-0479">Metal-binding</keyword>
<keyword id="KW-0507">mRNA processing</keyword>
<keyword id="KW-0547">Nucleotide-binding</keyword>
<keyword id="KW-1185">Reference proteome</keyword>
<keyword id="KW-0694">RNA-binding</keyword>
<reference key="1">
    <citation type="journal article" date="2002" name="Nature">
        <title>The genome sequence of Schizosaccharomyces pombe.</title>
        <authorList>
            <person name="Wood V."/>
            <person name="Gwilliam R."/>
            <person name="Rajandream M.A."/>
            <person name="Lyne M.H."/>
            <person name="Lyne R."/>
            <person name="Stewart A."/>
            <person name="Sgouros J.G."/>
            <person name="Peat N."/>
            <person name="Hayles J."/>
            <person name="Baker S.G."/>
            <person name="Basham D."/>
            <person name="Bowman S."/>
            <person name="Brooks K."/>
            <person name="Brown D."/>
            <person name="Brown S."/>
            <person name="Chillingworth T."/>
            <person name="Churcher C.M."/>
            <person name="Collins M."/>
            <person name="Connor R."/>
            <person name="Cronin A."/>
            <person name="Davis P."/>
            <person name="Feltwell T."/>
            <person name="Fraser A."/>
            <person name="Gentles S."/>
            <person name="Goble A."/>
            <person name="Hamlin N."/>
            <person name="Harris D.E."/>
            <person name="Hidalgo J."/>
            <person name="Hodgson G."/>
            <person name="Holroyd S."/>
            <person name="Hornsby T."/>
            <person name="Howarth S."/>
            <person name="Huckle E.J."/>
            <person name="Hunt S."/>
            <person name="Jagels K."/>
            <person name="James K.D."/>
            <person name="Jones L."/>
            <person name="Jones M."/>
            <person name="Leather S."/>
            <person name="McDonald S."/>
            <person name="McLean J."/>
            <person name="Mooney P."/>
            <person name="Moule S."/>
            <person name="Mungall K.L."/>
            <person name="Murphy L.D."/>
            <person name="Niblett D."/>
            <person name="Odell C."/>
            <person name="Oliver K."/>
            <person name="O'Neil S."/>
            <person name="Pearson D."/>
            <person name="Quail M.A."/>
            <person name="Rabbinowitsch E."/>
            <person name="Rutherford K.M."/>
            <person name="Rutter S."/>
            <person name="Saunders D."/>
            <person name="Seeger K."/>
            <person name="Sharp S."/>
            <person name="Skelton J."/>
            <person name="Simmonds M.N."/>
            <person name="Squares R."/>
            <person name="Squares S."/>
            <person name="Stevens K."/>
            <person name="Taylor K."/>
            <person name="Taylor R.G."/>
            <person name="Tivey A."/>
            <person name="Walsh S.V."/>
            <person name="Warren T."/>
            <person name="Whitehead S."/>
            <person name="Woodward J.R."/>
            <person name="Volckaert G."/>
            <person name="Aert R."/>
            <person name="Robben J."/>
            <person name="Grymonprez B."/>
            <person name="Weltjens I."/>
            <person name="Vanstreels E."/>
            <person name="Rieger M."/>
            <person name="Schaefer M."/>
            <person name="Mueller-Auer S."/>
            <person name="Gabel C."/>
            <person name="Fuchs M."/>
            <person name="Duesterhoeft A."/>
            <person name="Fritzc C."/>
            <person name="Holzer E."/>
            <person name="Moestl D."/>
            <person name="Hilbert H."/>
            <person name="Borzym K."/>
            <person name="Langer I."/>
            <person name="Beck A."/>
            <person name="Lehrach H."/>
            <person name="Reinhardt R."/>
            <person name="Pohl T.M."/>
            <person name="Eger P."/>
            <person name="Zimmermann W."/>
            <person name="Wedler H."/>
            <person name="Wambutt R."/>
            <person name="Purnelle B."/>
            <person name="Goffeau A."/>
            <person name="Cadieu E."/>
            <person name="Dreano S."/>
            <person name="Gloux S."/>
            <person name="Lelaure V."/>
            <person name="Mottier S."/>
            <person name="Galibert F."/>
            <person name="Aves S.J."/>
            <person name="Xiang Z."/>
            <person name="Hunt C."/>
            <person name="Moore K."/>
            <person name="Hurst S.M."/>
            <person name="Lucas M."/>
            <person name="Rochet M."/>
            <person name="Gaillardin C."/>
            <person name="Tallada V.A."/>
            <person name="Garzon A."/>
            <person name="Thode G."/>
            <person name="Daga R.R."/>
            <person name="Cruzado L."/>
            <person name="Jimenez J."/>
            <person name="Sanchez M."/>
            <person name="del Rey F."/>
            <person name="Benito J."/>
            <person name="Dominguez A."/>
            <person name="Revuelta J.L."/>
            <person name="Moreno S."/>
            <person name="Armstrong J."/>
            <person name="Forsburg S.L."/>
            <person name="Cerutti L."/>
            <person name="Lowe T."/>
            <person name="McCombie W.R."/>
            <person name="Paulsen I."/>
            <person name="Potashkin J."/>
            <person name="Shpakovski G.V."/>
            <person name="Ussery D."/>
            <person name="Barrell B.G."/>
            <person name="Nurse P."/>
        </authorList>
    </citation>
    <scope>NUCLEOTIDE SEQUENCE [LARGE SCALE GENOMIC DNA]</scope>
    <source>
        <strain>972 / ATCC 24843</strain>
    </source>
</reference>
<reference key="2">
    <citation type="journal article" date="2004" name="J. Biochem.">
        <title>Decapping reaction of mRNA requires Dcp1 in fission yeast: its characterization in different species from yeast to human.</title>
        <authorList>
            <person name="Sakuno T."/>
            <person name="Araki Y."/>
            <person name="Ohya Y."/>
            <person name="Kofuji S."/>
            <person name="Takahashi S."/>
            <person name="Hoshino S."/>
            <person name="Katada T."/>
        </authorList>
    </citation>
    <scope>FUNCTION</scope>
</reference>
<reference key="3">
    <citation type="journal article" date="2006" name="Nat. Biotechnol.">
        <title>ORFeome cloning and global analysis of protein localization in the fission yeast Schizosaccharomyces pombe.</title>
        <authorList>
            <person name="Matsuyama A."/>
            <person name="Arai R."/>
            <person name="Yashiroda Y."/>
            <person name="Shirai A."/>
            <person name="Kamata A."/>
            <person name="Sekido S."/>
            <person name="Kobayashi Y."/>
            <person name="Hashimoto A."/>
            <person name="Hamamoto M."/>
            <person name="Hiraoka Y."/>
            <person name="Horinouchi S."/>
            <person name="Yoshida M."/>
        </authorList>
    </citation>
    <scope>SUBCELLULAR LOCATION [LARGE SCALE ANALYSIS]</scope>
</reference>
<reference key="4">
    <citation type="journal article" date="2013" name="Mol. Cell. Biol.">
        <title>Pdc1 functions in the assembly of P bodies in Schizosaccharomyces pombe.</title>
        <authorList>
            <person name="Wang C.Y."/>
            <person name="Chen W.L."/>
            <person name="Wang S.W."/>
        </authorList>
    </citation>
    <scope>SUBCELLULAR LOCATION</scope>
    <scope>INTERACTION WITH PDC1</scope>
</reference>
<reference key="5">
    <citation type="journal article" date="2017" name="RNA">
        <title>Involvement of fission yeast Pdc2 in RNA degradation and P-body function.</title>
        <authorList>
            <person name="Wang C.Y."/>
            <person name="Wang Y.T."/>
            <person name="Hsiao W.Y."/>
            <person name="Wang S.W."/>
        </authorList>
    </citation>
    <scope>INTERACTION WITH PDC2</scope>
</reference>
<reference key="6">
    <citation type="journal article" date="2006" name="Nat. Struct. Mol. Biol.">
        <title>Crystal structure and functional analysis of Dcp2p from Schizosaccharomyces pombe.</title>
        <authorList>
            <person name="She M."/>
            <person name="Decker C.J."/>
            <person name="Chen N."/>
            <person name="Tumati S."/>
            <person name="Parker R."/>
            <person name="Song H."/>
        </authorList>
    </citation>
    <scope>X-RAY CRYSTALLOGRAPHY (2.5 ANGSTROMS) OF 1-266</scope>
    <scope>INTERACTION WITH DCP1</scope>
    <scope>MUTAGENESIS OF ARG-18; PHE-19; PHE-44; GLU-143 AND GLU-192</scope>
</reference>
<reference key="7">
    <citation type="journal article" date="2008" name="Mol. Cell">
        <title>Structural basis of dcp2 recognition and activation by dcp1.</title>
        <authorList>
            <person name="She M."/>
            <person name="Decker C.J."/>
            <person name="Svergun D.I."/>
            <person name="Round A."/>
            <person name="Chen N."/>
            <person name="Muhlrad D."/>
            <person name="Parker R."/>
            <person name="Song H."/>
        </authorList>
    </citation>
    <scope>X-RAY CRYSTALLOGRAPHY (2.33 ANGSTROMS) OF 1-266 IN COMPLEX WITH DCP1</scope>
</reference>
<reference key="8">
    <citation type="journal article" date="2012" name="EMBO J.">
        <title>The structural basis of Edc3- and Scd6-mediated activation of the Dcp1:Dcp2 mRNA decapping complex.</title>
        <authorList>
            <person name="Fromm S.A."/>
            <person name="Truffault V."/>
            <person name="Kamenz J."/>
            <person name="Braun J.E."/>
            <person name="Hoffmann N.A."/>
            <person name="Izaurralde E."/>
            <person name="Sprangers R."/>
        </authorList>
    </citation>
    <scope>STRUCTURE BY NMR OF 242-291 IN COMPLEX WITH EDC3</scope>
</reference>
<gene>
    <name type="primary">dcp2</name>
    <name type="ORF">SPAC19A8.12</name>
</gene>
<sequence>MSFTNATFSQVLDDLSARFILNLPAEEQSSVERLCFQIEQAHWFYEDFIRAQNDQLPSLGLRVFSAKLFAHCPLLWKWSKVHEEAFDDFLRYKTRIPVRGAIMLDMSMQQCVLVKGWKASSGWGFPKGKIDKDESDVDCAIREVYEETGFDCSSRINPNEFIDMTIRGQNVRLYIIPGISLDTRFESRTRKEISKIEWHNLMDLPTFKKNKPQTMKNKFYMVIPFLAPLKKWIKKRNIANNTTKEKNISVDVDADASSQLLSLLKSSTAPSDLATPQPSTFPQPPVESHSSFDIKQKILHLLNEGNEPKSPIQLPPVSNLPLNPPIQSSNSRLSHDNNSFDPFAYLGLDPKNPSASFPRVVSQNNMLTNKPVLNNHFQQSMYSNLLKDQNSVQHLFAASDMPSPMELPSPSTVYHQVFYPPTSTSVSSYGLGKTPQPAYGSSSPYVNGHQTQQISSLPPFQSQTQFLARNSDNSGQSYNSEGDSNSKRLLSMLSQQDTTPSSSTLSKEANVQLANLFLTPNSLETKKFSDNSQGEEISDNLHGESCNNPNANSVHSAQLLQALLHPSATETKEETPKKTSDSLSLLTLLKSGLPTPANDLQNKSQNNERKASSQVKELEVKNYSKSTDLLKKTLRIPRNDEPLEAANQFDLLKVSPQQKSEVPPKRNELSQSKLKNRKKKENSETNKNHVDMSPGFVKILKRSPLADQKKEDTQESDFKGSDDHFLSYLQSVVSSNSNGLH</sequence>
<comment type="function">
    <text evidence="4">Catalytic component of the decapping complex necessary for the degradation of mRNAs, both in normal mRNA turnover and in nonsense-mediated mRNA decay. Removes the 7-methyl guanine cap structure from mRNA molecules, yielding a 5'-phosphorylated mRNA fragment and 7m-GDP. Decapping is the major pathway of mRNA degradation in yeast. It occurs through deadenylation, decapping and subsequent 5' to 3' exonucleolytic decay of the transcript body.</text>
</comment>
<comment type="cofactor">
    <cofactor evidence="1">
        <name>Mn(2+)</name>
        <dbReference type="ChEBI" id="CHEBI:29035"/>
    </cofactor>
</comment>
<comment type="subunit">
    <text evidence="5 7 8 9 10">Component of the decapping complex composed of dcp1 and dcp2 (PubMed:16341225, PubMed:18280239). Interacts with edc3 (PubMed:22085934). Interacts with pdc1; via N-terminus (PubMed:23319050). Interacts with pdc2 (PubMed:28031482).</text>
</comment>
<comment type="interaction">
    <interactant intactId="EBI-3647323">
        <id>O13828</id>
    </interactant>
    <interactant intactId="EBI-7557105">
        <id>Q9P805</id>
        <label>dcp1</label>
    </interactant>
    <organismsDiffer>false</organismsDiffer>
    <experiments>7</experiments>
</comment>
<comment type="interaction">
    <interactant intactId="EBI-3647323">
        <id>O13828</id>
    </interactant>
    <interactant intactId="EBI-7556871">
        <id>O94752</id>
        <label>edc3</label>
    </interactant>
    <organismsDiffer>false</organismsDiffer>
    <experiments>5</experiments>
</comment>
<comment type="interaction">
    <interactant intactId="EBI-3647323">
        <id>O13828</id>
    </interactant>
    <interactant intactId="EBI-1117052">
        <id>Q9HGL3</id>
        <label>sum2</label>
    </interactant>
    <organismsDiffer>false</organismsDiffer>
    <experiments>4</experiments>
</comment>
<comment type="subcellular location">
    <subcellularLocation>
        <location evidence="6 9">Cytoplasm</location>
        <location evidence="6 9">P-body</location>
    </subcellularLocation>
    <text evidence="6 9">Is concentrated in several cytoplasmic foci called P bodies (or cytoplasmic processing bodies) which represent sites of mRNA decapping and 5' to 3' exonucleotidic decay.</text>
</comment>
<comment type="similarity">
    <text evidence="11">Belongs to the Nudix hydrolase family. DCP2 subfamily.</text>
</comment>
<feature type="chain" id="PRO_0000373871" description="mRNA decapping complex subunit 2">
    <location>
        <begin position="1"/>
        <end position="741"/>
    </location>
</feature>
<feature type="domain" description="Nudix hydrolase" evidence="2">
    <location>
        <begin position="94"/>
        <end position="227"/>
    </location>
</feature>
<feature type="region of interest" description="Interaction with pdc1" evidence="9">
    <location>
        <begin position="1"/>
        <end position="243"/>
    </location>
</feature>
<feature type="region of interest" description="Disordered" evidence="3">
    <location>
        <begin position="268"/>
        <end position="289"/>
    </location>
</feature>
<feature type="region of interest" description="Disordered" evidence="3">
    <location>
        <begin position="425"/>
        <end position="453"/>
    </location>
</feature>
<feature type="region of interest" description="Disordered" evidence="3">
    <location>
        <begin position="525"/>
        <end position="552"/>
    </location>
</feature>
<feature type="region of interest" description="Disordered" evidence="3">
    <location>
        <begin position="592"/>
        <end position="616"/>
    </location>
</feature>
<feature type="region of interest" description="Disordered" evidence="3">
    <location>
        <begin position="654"/>
        <end position="721"/>
    </location>
</feature>
<feature type="short sequence motif" description="Nudix box">
    <location>
        <begin position="128"/>
        <end position="149"/>
    </location>
</feature>
<feature type="compositionally biased region" description="Polar residues" evidence="3">
    <location>
        <begin position="268"/>
        <end position="278"/>
    </location>
</feature>
<feature type="compositionally biased region" description="Polar residues" evidence="3">
    <location>
        <begin position="439"/>
        <end position="453"/>
    </location>
</feature>
<feature type="compositionally biased region" description="Basic and acidic residues" evidence="3">
    <location>
        <begin position="606"/>
        <end position="616"/>
    </location>
</feature>
<feature type="compositionally biased region" description="Basic and acidic residues" evidence="3">
    <location>
        <begin position="681"/>
        <end position="690"/>
    </location>
</feature>
<feature type="compositionally biased region" description="Basic and acidic residues" evidence="3">
    <location>
        <begin position="707"/>
        <end position="721"/>
    </location>
</feature>
<feature type="binding site">
    <location>
        <position position="167"/>
    </location>
    <ligand>
        <name>ATP</name>
        <dbReference type="ChEBI" id="CHEBI:30616"/>
    </ligand>
</feature>
<feature type="binding site">
    <location>
        <position position="220"/>
    </location>
    <ligand>
        <name>ATP</name>
        <dbReference type="ChEBI" id="CHEBI:30616"/>
    </ligand>
</feature>
<feature type="mutagenesis site" description="Abolishes interaction with dcp1." evidence="5">
    <original>R</original>
    <variation>A</variation>
    <location>
        <position position="18"/>
    </location>
</feature>
<feature type="mutagenesis site" description="Decreases interaction with dcp1." evidence="5">
    <original>F</original>
    <variation>A</variation>
    <location>
        <position position="19"/>
    </location>
</feature>
<feature type="mutagenesis site" description="Decreases interaction with dcp1." evidence="5">
    <original>F</original>
    <variation>A</variation>
    <location>
        <position position="44"/>
    </location>
</feature>
<feature type="mutagenesis site" description="Abolishes the decapping activity in vitro." evidence="5">
    <original>E</original>
    <variation>A</variation>
    <location>
        <position position="143"/>
    </location>
</feature>
<feature type="mutagenesis site" description="Abolishes the decapping activity in vitro." evidence="5">
    <original>E</original>
    <variation>A</variation>
    <location>
        <position position="192"/>
    </location>
</feature>
<feature type="turn" evidence="17">
    <location>
        <begin position="2"/>
        <end position="5"/>
    </location>
</feature>
<feature type="helix" evidence="15">
    <location>
        <begin position="8"/>
        <end position="19"/>
    </location>
</feature>
<feature type="turn" evidence="15">
    <location>
        <begin position="20"/>
        <end position="22"/>
    </location>
</feature>
<feature type="helix" evidence="15">
    <location>
        <begin position="25"/>
        <end position="28"/>
    </location>
</feature>
<feature type="helix" evidence="15">
    <location>
        <begin position="31"/>
        <end position="47"/>
    </location>
</feature>
<feature type="helix" evidence="15">
    <location>
        <begin position="49"/>
        <end position="52"/>
    </location>
</feature>
<feature type="strand" evidence="12">
    <location>
        <begin position="54"/>
        <end position="56"/>
    </location>
</feature>
<feature type="helix" evidence="15">
    <location>
        <begin position="61"/>
        <end position="69"/>
    </location>
</feature>
<feature type="helix" evidence="15">
    <location>
        <begin position="73"/>
        <end position="75"/>
    </location>
</feature>
<feature type="helix" evidence="15">
    <location>
        <begin position="76"/>
        <end position="81"/>
    </location>
</feature>
<feature type="helix" evidence="15">
    <location>
        <begin position="83"/>
        <end position="90"/>
    </location>
</feature>
<feature type="strand" evidence="15">
    <location>
        <begin position="98"/>
        <end position="104"/>
    </location>
</feature>
<feature type="strand" evidence="15">
    <location>
        <begin position="110"/>
        <end position="115"/>
    </location>
</feature>
<feature type="strand" evidence="15">
    <location>
        <begin position="117"/>
        <end position="120"/>
    </location>
</feature>
<feature type="strand" evidence="15">
    <location>
        <begin position="126"/>
        <end position="129"/>
    </location>
</feature>
<feature type="strand" evidence="15">
    <location>
        <begin position="132"/>
        <end position="134"/>
    </location>
</feature>
<feature type="helix" evidence="15">
    <location>
        <begin position="136"/>
        <end position="148"/>
    </location>
</feature>
<feature type="turn" evidence="15">
    <location>
        <begin position="153"/>
        <end position="155"/>
    </location>
</feature>
<feature type="strand" evidence="15">
    <location>
        <begin position="161"/>
        <end position="166"/>
    </location>
</feature>
<feature type="strand" evidence="15">
    <location>
        <begin position="169"/>
        <end position="176"/>
    </location>
</feature>
<feature type="strand" evidence="18">
    <location>
        <begin position="189"/>
        <end position="192"/>
    </location>
</feature>
<feature type="strand" evidence="15">
    <location>
        <begin position="195"/>
        <end position="200"/>
    </location>
</feature>
<feature type="helix" evidence="15">
    <location>
        <begin position="201"/>
        <end position="203"/>
    </location>
</feature>
<feature type="turn" evidence="17">
    <location>
        <begin position="205"/>
        <end position="207"/>
    </location>
</feature>
<feature type="strand" evidence="16">
    <location>
        <begin position="208"/>
        <end position="210"/>
    </location>
</feature>
<feature type="turn" evidence="15">
    <location>
        <begin position="218"/>
        <end position="222"/>
    </location>
</feature>
<feature type="helix" evidence="15">
    <location>
        <begin position="223"/>
        <end position="240"/>
    </location>
</feature>
<feature type="strand" evidence="13">
    <location>
        <begin position="245"/>
        <end position="247"/>
    </location>
</feature>
<feature type="helix" evidence="13">
    <location>
        <begin position="255"/>
        <end position="265"/>
    </location>
</feature>
<feature type="strand" evidence="14">
    <location>
        <begin position="272"/>
        <end position="274"/>
    </location>
</feature>